<keyword id="KW-0119">Carbohydrate metabolism</keyword>
<keyword id="KW-0378">Hydrolase</keyword>
<keyword id="KW-0464">Manganese</keyword>
<dbReference type="EC" id="3.1.3.11" evidence="1"/>
<dbReference type="EMBL" id="CP000962">
    <property type="protein sequence ID" value="ACA54975.1"/>
    <property type="molecule type" value="Genomic_DNA"/>
</dbReference>
<dbReference type="RefSeq" id="WP_012343011.1">
    <property type="nucleotide sequence ID" value="NC_010520.1"/>
</dbReference>
<dbReference type="KEGG" id="cbl:CLK_3727"/>
<dbReference type="HOGENOM" id="CLU_028392_2_0_9"/>
<dbReference type="UniPathway" id="UPA00138"/>
<dbReference type="GO" id="GO:0042132">
    <property type="term" value="F:fructose 1,6-bisphosphate 1-phosphatase activity"/>
    <property type="evidence" value="ECO:0007669"/>
    <property type="project" value="UniProtKB-UniRule"/>
</dbReference>
<dbReference type="GO" id="GO:0006094">
    <property type="term" value="P:gluconeogenesis"/>
    <property type="evidence" value="ECO:0007669"/>
    <property type="project" value="UniProtKB-UniRule"/>
</dbReference>
<dbReference type="Gene3D" id="3.60.21.10">
    <property type="match status" value="1"/>
</dbReference>
<dbReference type="HAMAP" id="MF_01854">
    <property type="entry name" value="FBPase_class3"/>
    <property type="match status" value="1"/>
</dbReference>
<dbReference type="InterPro" id="IPR009164">
    <property type="entry name" value="FBPtase_class3"/>
</dbReference>
<dbReference type="InterPro" id="IPR029052">
    <property type="entry name" value="Metallo-depent_PP-like"/>
</dbReference>
<dbReference type="Pfam" id="PF06874">
    <property type="entry name" value="FBPase_2"/>
    <property type="match status" value="1"/>
</dbReference>
<dbReference type="PIRSF" id="PIRSF000906">
    <property type="entry name" value="FBPtase_Bacill"/>
    <property type="match status" value="1"/>
</dbReference>
<dbReference type="SUPFAM" id="SSF56300">
    <property type="entry name" value="Metallo-dependent phosphatases"/>
    <property type="match status" value="1"/>
</dbReference>
<evidence type="ECO:0000255" key="1">
    <source>
        <dbReference type="HAMAP-Rule" id="MF_01854"/>
    </source>
</evidence>
<name>F16PC_CLOBM</name>
<accession>B1KVJ4</accession>
<gene>
    <name evidence="1" type="primary">fbp</name>
    <name type="ordered locus">CLK_3727</name>
</gene>
<comment type="catalytic activity">
    <reaction evidence="1">
        <text>beta-D-fructose 1,6-bisphosphate + H2O = beta-D-fructose 6-phosphate + phosphate</text>
        <dbReference type="Rhea" id="RHEA:11064"/>
        <dbReference type="ChEBI" id="CHEBI:15377"/>
        <dbReference type="ChEBI" id="CHEBI:32966"/>
        <dbReference type="ChEBI" id="CHEBI:43474"/>
        <dbReference type="ChEBI" id="CHEBI:57634"/>
        <dbReference type="EC" id="3.1.3.11"/>
    </reaction>
</comment>
<comment type="cofactor">
    <cofactor evidence="1">
        <name>Mn(2+)</name>
        <dbReference type="ChEBI" id="CHEBI:29035"/>
    </cofactor>
</comment>
<comment type="pathway">
    <text evidence="1">Carbohydrate biosynthesis; gluconeogenesis.</text>
</comment>
<comment type="similarity">
    <text evidence="1">Belongs to the FBPase class 3 family.</text>
</comment>
<organism>
    <name type="scientific">Clostridium botulinum (strain Loch Maree / Type A3)</name>
    <dbReference type="NCBI Taxonomy" id="498214"/>
    <lineage>
        <taxon>Bacteria</taxon>
        <taxon>Bacillati</taxon>
        <taxon>Bacillota</taxon>
        <taxon>Clostridia</taxon>
        <taxon>Eubacteriales</taxon>
        <taxon>Clostridiaceae</taxon>
        <taxon>Clostridium</taxon>
    </lineage>
</organism>
<sequence>MTLYDENNLHIIKDNLRYLKLLSKQYPSISSASSEIINLQAILNLPKGTEHFISDVHGEYESFTHMLKNASGVIKRKIDDVFGTSLRECDKRNLATLIYYPEQKLDLIKKSEKNLEDWYKITLYRLIRLCQIVSSKYTRSKVRKALPSDFAYIIEELLNEQGDRVDKQEYYNSIIETIIDIDRASEFIIAISNVIQRLVVDKLHIIGDIYDRGPGAEIIIEALSKHHSIDIQWGNHDIVWMGAAAGCEACIANVIRISLRYANLSTLEDGYGINLLPLATFAMDFYKEDNCENFKPRTIDKNLNKTDIKLLSKMHKAISIIQFKLEGKIIKRRPEFKMEERLLLDKINIKEGTLNLNEKIYKLIDTNFPTLDKENPYELNERERDLVEKLTNSFINSEKLQRHIKFLYSNGSLYLKYNSNLLYHGCIPLNEDGSLKEVTLCKETLKGKSLLDKLDRLAREAYFFKKDPESKLYGMDMMWYLWCGPNSPLFGKKKMTTFERYFLDDKDTHKEEKNPYYKYRNDEKMCTIIFEEFELDVDNSHIINGHIPVKTKEGENPIKANGKLLVIDGGFCKAYQPQTGIAGYTLIYNSYGLLLTSHEPFSSIHKAIVEGNDILSSTIILEHVSSRKRVLDTDSGEEIKKQIHDLEMLLVAYRKGLIKEENEANIRF</sequence>
<protein>
    <recommendedName>
        <fullName evidence="1">Fructose-1,6-bisphosphatase class 3</fullName>
        <shortName evidence="1">FBPase class 3</shortName>
        <ecNumber evidence="1">3.1.3.11</ecNumber>
    </recommendedName>
    <alternativeName>
        <fullName evidence="1">D-fructose-1,6-bisphosphate 1-phosphohydrolase class 3</fullName>
    </alternativeName>
</protein>
<reference key="1">
    <citation type="journal article" date="2007" name="PLoS ONE">
        <title>Analysis of the neurotoxin complex genes in Clostridium botulinum A1-A4 and B1 strains: BoNT/A3, /Ba4 and /B1 clusters are located within plasmids.</title>
        <authorList>
            <person name="Smith T.J."/>
            <person name="Hill K.K."/>
            <person name="Foley B.T."/>
            <person name="Detter J.C."/>
            <person name="Munk A.C."/>
            <person name="Bruce D.C."/>
            <person name="Doggett N.A."/>
            <person name="Smith L.A."/>
            <person name="Marks J.D."/>
            <person name="Xie G."/>
            <person name="Brettin T.S."/>
        </authorList>
    </citation>
    <scope>NUCLEOTIDE SEQUENCE [LARGE SCALE GENOMIC DNA]</scope>
    <source>
        <strain>Loch Maree / Type A3</strain>
    </source>
</reference>
<proteinExistence type="inferred from homology"/>
<feature type="chain" id="PRO_0000363085" description="Fructose-1,6-bisphosphatase class 3">
    <location>
        <begin position="1"/>
        <end position="668"/>
    </location>
</feature>